<accession>Q8Y556</accession>
<comment type="function">
    <text evidence="1">Shows a 3'-5' exoribonuclease activity.</text>
</comment>
<comment type="similarity">
    <text evidence="1">Belongs to the YhaM family.</text>
</comment>
<keyword id="KW-0238">DNA-binding</keyword>
<keyword id="KW-0269">Exonuclease</keyword>
<keyword id="KW-0378">Hydrolase</keyword>
<keyword id="KW-0540">Nuclease</keyword>
<keyword id="KW-1185">Reference proteome</keyword>
<sequence>MEKRLLDFEVGETVDLFLLIKSSVKGTASNGKPFLSLVLQDKSGELEAKLWDVKESDEANYGVQQIVHLMGDIQNYRGRKQLKIRQIRQATALDGVSASEFMETAPINKEEMADEITQYIFEMKNANLQRITRALLKKYQDDFYDYPAAMRHHHEFVSGLSFHVVSMLRLAKSVADLYPSVNRDLLYAGVILHDLGKVIELSGPVSTTYTLEGNLIGHISIVVEEVSKIADELSIDGEEVVVLKHVLLSHHGKGEWGSPKPPLVREAEILHQIDLMDASLNMMDKVLKHTKPGEFSERVFGLDNRSFYNPTFE</sequence>
<dbReference type="EC" id="3.1.-.-" evidence="1"/>
<dbReference type="EMBL" id="AL591982">
    <property type="protein sequence ID" value="CAD00298.1"/>
    <property type="molecule type" value="Genomic_DNA"/>
</dbReference>
<dbReference type="PIR" id="AD1352">
    <property type="entry name" value="AD1352"/>
</dbReference>
<dbReference type="RefSeq" id="NP_465744.1">
    <property type="nucleotide sequence ID" value="NC_003210.1"/>
</dbReference>
<dbReference type="RefSeq" id="WP_009924694.1">
    <property type="nucleotide sequence ID" value="NZ_CP149495.1"/>
</dbReference>
<dbReference type="SMR" id="Q8Y556"/>
<dbReference type="STRING" id="169963.gene:17594911"/>
<dbReference type="PaxDb" id="169963-lmo2220"/>
<dbReference type="EnsemblBacteria" id="CAD00298">
    <property type="protein sequence ID" value="CAD00298"/>
    <property type="gene ID" value="CAD00298"/>
</dbReference>
<dbReference type="GeneID" id="986701"/>
<dbReference type="KEGG" id="lmo:lmo2220"/>
<dbReference type="PATRIC" id="fig|169963.11.peg.2272"/>
<dbReference type="eggNOG" id="COG3481">
    <property type="taxonomic scope" value="Bacteria"/>
</dbReference>
<dbReference type="HOGENOM" id="CLU_056349_2_0_9"/>
<dbReference type="OrthoDB" id="9778453at2"/>
<dbReference type="PhylomeDB" id="Q8Y556"/>
<dbReference type="BioCyc" id="LMON169963:LMO2220-MONOMER"/>
<dbReference type="Proteomes" id="UP000000817">
    <property type="component" value="Chromosome"/>
</dbReference>
<dbReference type="GO" id="GO:0000175">
    <property type="term" value="F:3'-5'-RNA exonuclease activity"/>
    <property type="evidence" value="ECO:0007669"/>
    <property type="project" value="UniProtKB-UniRule"/>
</dbReference>
<dbReference type="GO" id="GO:0003677">
    <property type="term" value="F:DNA binding"/>
    <property type="evidence" value="ECO:0007669"/>
    <property type="project" value="UniProtKB-KW"/>
</dbReference>
<dbReference type="GO" id="GO:0031125">
    <property type="term" value="P:rRNA 3'-end processing"/>
    <property type="evidence" value="ECO:0000318"/>
    <property type="project" value="GO_Central"/>
</dbReference>
<dbReference type="CDD" id="cd00077">
    <property type="entry name" value="HDc"/>
    <property type="match status" value="1"/>
</dbReference>
<dbReference type="CDD" id="cd04492">
    <property type="entry name" value="YhaM_OBF_like"/>
    <property type="match status" value="1"/>
</dbReference>
<dbReference type="FunFam" id="1.10.3210.10:FF:000008">
    <property type="entry name" value="3'-5' exoribonuclease YhaM"/>
    <property type="match status" value="1"/>
</dbReference>
<dbReference type="Gene3D" id="1.10.3210.10">
    <property type="entry name" value="Hypothetical protein af1432"/>
    <property type="match status" value="1"/>
</dbReference>
<dbReference type="Gene3D" id="2.40.50.140">
    <property type="entry name" value="Nucleic acid-binding proteins"/>
    <property type="match status" value="1"/>
</dbReference>
<dbReference type="HAMAP" id="MF_01427">
    <property type="entry name" value="3_5_Exoribonuc_YhaM"/>
    <property type="match status" value="1"/>
</dbReference>
<dbReference type="InterPro" id="IPR020873">
    <property type="entry name" value="3'-5'_exoribonuclease_YhaM"/>
</dbReference>
<dbReference type="InterPro" id="IPR003607">
    <property type="entry name" value="HD/PDEase_dom"/>
</dbReference>
<dbReference type="InterPro" id="IPR006674">
    <property type="entry name" value="HD_domain"/>
</dbReference>
<dbReference type="InterPro" id="IPR012340">
    <property type="entry name" value="NA-bd_OB-fold"/>
</dbReference>
<dbReference type="InterPro" id="IPR004365">
    <property type="entry name" value="NA-bd_OB_tRNA"/>
</dbReference>
<dbReference type="InterPro" id="IPR050798">
    <property type="entry name" value="YhaM_exoribonuc/phosphodiest"/>
</dbReference>
<dbReference type="NCBIfam" id="NF010007">
    <property type="entry name" value="PRK13480.1"/>
    <property type="match status" value="1"/>
</dbReference>
<dbReference type="PANTHER" id="PTHR37294">
    <property type="entry name" value="3'-5' EXORIBONUCLEASE YHAM"/>
    <property type="match status" value="1"/>
</dbReference>
<dbReference type="PANTHER" id="PTHR37294:SF1">
    <property type="entry name" value="3'-5' EXORIBONUCLEASE YHAM"/>
    <property type="match status" value="1"/>
</dbReference>
<dbReference type="Pfam" id="PF01966">
    <property type="entry name" value="HD"/>
    <property type="match status" value="1"/>
</dbReference>
<dbReference type="Pfam" id="PF01336">
    <property type="entry name" value="tRNA_anti-codon"/>
    <property type="match status" value="1"/>
</dbReference>
<dbReference type="SUPFAM" id="SSF109604">
    <property type="entry name" value="HD-domain/PDEase-like"/>
    <property type="match status" value="1"/>
</dbReference>
<dbReference type="PROSITE" id="PS51831">
    <property type="entry name" value="HD"/>
    <property type="match status" value="1"/>
</dbReference>
<feature type="chain" id="PRO_0000109865" description="3'-5' exoribonuclease YhaM">
    <location>
        <begin position="1"/>
        <end position="313"/>
    </location>
</feature>
<feature type="domain" description="HD" evidence="2">
    <location>
        <begin position="163"/>
        <end position="279"/>
    </location>
</feature>
<feature type="DNA-binding region" description="OB">
    <location>
        <begin position="22"/>
        <end position="90"/>
    </location>
</feature>
<protein>
    <recommendedName>
        <fullName evidence="1">3'-5' exoribonuclease YhaM</fullName>
        <ecNumber evidence="1">3.1.-.-</ecNumber>
    </recommendedName>
</protein>
<gene>
    <name evidence="1" type="primary">yhaM</name>
    <name type="ordered locus">lmo2220</name>
</gene>
<reference key="1">
    <citation type="journal article" date="2001" name="Science">
        <title>Comparative genomics of Listeria species.</title>
        <authorList>
            <person name="Glaser P."/>
            <person name="Frangeul L."/>
            <person name="Buchrieser C."/>
            <person name="Rusniok C."/>
            <person name="Amend A."/>
            <person name="Baquero F."/>
            <person name="Berche P."/>
            <person name="Bloecker H."/>
            <person name="Brandt P."/>
            <person name="Chakraborty T."/>
            <person name="Charbit A."/>
            <person name="Chetouani F."/>
            <person name="Couve E."/>
            <person name="de Daruvar A."/>
            <person name="Dehoux P."/>
            <person name="Domann E."/>
            <person name="Dominguez-Bernal G."/>
            <person name="Duchaud E."/>
            <person name="Durant L."/>
            <person name="Dussurget O."/>
            <person name="Entian K.-D."/>
            <person name="Fsihi H."/>
            <person name="Garcia-del Portillo F."/>
            <person name="Garrido P."/>
            <person name="Gautier L."/>
            <person name="Goebel W."/>
            <person name="Gomez-Lopez N."/>
            <person name="Hain T."/>
            <person name="Hauf J."/>
            <person name="Jackson D."/>
            <person name="Jones L.-M."/>
            <person name="Kaerst U."/>
            <person name="Kreft J."/>
            <person name="Kuhn M."/>
            <person name="Kunst F."/>
            <person name="Kurapkat G."/>
            <person name="Madueno E."/>
            <person name="Maitournam A."/>
            <person name="Mata Vicente J."/>
            <person name="Ng E."/>
            <person name="Nedjari H."/>
            <person name="Nordsiek G."/>
            <person name="Novella S."/>
            <person name="de Pablos B."/>
            <person name="Perez-Diaz J.-C."/>
            <person name="Purcell R."/>
            <person name="Remmel B."/>
            <person name="Rose M."/>
            <person name="Schlueter T."/>
            <person name="Simoes N."/>
            <person name="Tierrez A."/>
            <person name="Vazquez-Boland J.-A."/>
            <person name="Voss H."/>
            <person name="Wehland J."/>
            <person name="Cossart P."/>
        </authorList>
    </citation>
    <scope>NUCLEOTIDE SEQUENCE [LARGE SCALE GENOMIC DNA]</scope>
    <source>
        <strain>ATCC BAA-679 / EGD-e</strain>
    </source>
</reference>
<organism>
    <name type="scientific">Listeria monocytogenes serovar 1/2a (strain ATCC BAA-679 / EGD-e)</name>
    <dbReference type="NCBI Taxonomy" id="169963"/>
    <lineage>
        <taxon>Bacteria</taxon>
        <taxon>Bacillati</taxon>
        <taxon>Bacillota</taxon>
        <taxon>Bacilli</taxon>
        <taxon>Bacillales</taxon>
        <taxon>Listeriaceae</taxon>
        <taxon>Listeria</taxon>
    </lineage>
</organism>
<name>YHAM_LISMO</name>
<evidence type="ECO:0000255" key="1">
    <source>
        <dbReference type="HAMAP-Rule" id="MF_01427"/>
    </source>
</evidence>
<evidence type="ECO:0000255" key="2">
    <source>
        <dbReference type="PROSITE-ProRule" id="PRU01175"/>
    </source>
</evidence>
<proteinExistence type="inferred from homology"/>